<gene>
    <name evidence="1" type="primary">tdh</name>
    <name type="ordered locus">XOO3684</name>
</gene>
<dbReference type="EC" id="1.1.1.103" evidence="1"/>
<dbReference type="EMBL" id="AE013598">
    <property type="protein sequence ID" value="AAW76938.1"/>
    <property type="status" value="ALT_INIT"/>
    <property type="molecule type" value="Genomic_DNA"/>
</dbReference>
<dbReference type="SMR" id="Q5GWI3"/>
<dbReference type="STRING" id="291331.XOO3684"/>
<dbReference type="KEGG" id="xoo:XOO3684"/>
<dbReference type="HOGENOM" id="CLU_026673_11_0_6"/>
<dbReference type="UniPathway" id="UPA00046">
    <property type="reaction ID" value="UER00505"/>
</dbReference>
<dbReference type="Proteomes" id="UP000006735">
    <property type="component" value="Chromosome"/>
</dbReference>
<dbReference type="GO" id="GO:0005737">
    <property type="term" value="C:cytoplasm"/>
    <property type="evidence" value="ECO:0007669"/>
    <property type="project" value="UniProtKB-SubCell"/>
</dbReference>
<dbReference type="GO" id="GO:0008743">
    <property type="term" value="F:L-threonine 3-dehydrogenase activity"/>
    <property type="evidence" value="ECO:0007669"/>
    <property type="project" value="UniProtKB-UniRule"/>
</dbReference>
<dbReference type="GO" id="GO:0008270">
    <property type="term" value="F:zinc ion binding"/>
    <property type="evidence" value="ECO:0007669"/>
    <property type="project" value="UniProtKB-UniRule"/>
</dbReference>
<dbReference type="GO" id="GO:0019518">
    <property type="term" value="P:L-threonine catabolic process to glycine"/>
    <property type="evidence" value="ECO:0007669"/>
    <property type="project" value="UniProtKB-UniPathway"/>
</dbReference>
<dbReference type="Gene3D" id="3.90.180.10">
    <property type="entry name" value="Medium-chain alcohol dehydrogenases, catalytic domain"/>
    <property type="match status" value="1"/>
</dbReference>
<dbReference type="Gene3D" id="3.40.50.720">
    <property type="entry name" value="NAD(P)-binding Rossmann-like Domain"/>
    <property type="match status" value="1"/>
</dbReference>
<dbReference type="HAMAP" id="MF_00627">
    <property type="entry name" value="Thr_dehydrog"/>
    <property type="match status" value="1"/>
</dbReference>
<dbReference type="InterPro" id="IPR013149">
    <property type="entry name" value="ADH-like_C"/>
</dbReference>
<dbReference type="InterPro" id="IPR013154">
    <property type="entry name" value="ADH-like_N"/>
</dbReference>
<dbReference type="InterPro" id="IPR002328">
    <property type="entry name" value="ADH_Zn_CS"/>
</dbReference>
<dbReference type="InterPro" id="IPR011032">
    <property type="entry name" value="GroES-like_sf"/>
</dbReference>
<dbReference type="InterPro" id="IPR004627">
    <property type="entry name" value="L-Threonine_3-DHase"/>
</dbReference>
<dbReference type="InterPro" id="IPR036291">
    <property type="entry name" value="NAD(P)-bd_dom_sf"/>
</dbReference>
<dbReference type="InterPro" id="IPR020843">
    <property type="entry name" value="PKS_ER"/>
</dbReference>
<dbReference type="InterPro" id="IPR050129">
    <property type="entry name" value="Zn_alcohol_dh"/>
</dbReference>
<dbReference type="NCBIfam" id="NF003808">
    <property type="entry name" value="PRK05396.1"/>
    <property type="match status" value="1"/>
</dbReference>
<dbReference type="NCBIfam" id="TIGR00692">
    <property type="entry name" value="tdh"/>
    <property type="match status" value="1"/>
</dbReference>
<dbReference type="PANTHER" id="PTHR43401">
    <property type="entry name" value="L-THREONINE 3-DEHYDROGENASE"/>
    <property type="match status" value="1"/>
</dbReference>
<dbReference type="PANTHER" id="PTHR43401:SF2">
    <property type="entry name" value="L-THREONINE 3-DEHYDROGENASE"/>
    <property type="match status" value="1"/>
</dbReference>
<dbReference type="Pfam" id="PF08240">
    <property type="entry name" value="ADH_N"/>
    <property type="match status" value="1"/>
</dbReference>
<dbReference type="Pfam" id="PF00107">
    <property type="entry name" value="ADH_zinc_N"/>
    <property type="match status" value="1"/>
</dbReference>
<dbReference type="SMART" id="SM00829">
    <property type="entry name" value="PKS_ER"/>
    <property type="match status" value="1"/>
</dbReference>
<dbReference type="SUPFAM" id="SSF50129">
    <property type="entry name" value="GroES-like"/>
    <property type="match status" value="1"/>
</dbReference>
<dbReference type="SUPFAM" id="SSF51735">
    <property type="entry name" value="NAD(P)-binding Rossmann-fold domains"/>
    <property type="match status" value="1"/>
</dbReference>
<dbReference type="PROSITE" id="PS00059">
    <property type="entry name" value="ADH_ZINC"/>
    <property type="match status" value="1"/>
</dbReference>
<evidence type="ECO:0000255" key="1">
    <source>
        <dbReference type="HAMAP-Rule" id="MF_00627"/>
    </source>
</evidence>
<evidence type="ECO:0000305" key="2"/>
<organism>
    <name type="scientific">Xanthomonas oryzae pv. oryzae (strain KACC10331 / KXO85)</name>
    <dbReference type="NCBI Taxonomy" id="291331"/>
    <lineage>
        <taxon>Bacteria</taxon>
        <taxon>Pseudomonadati</taxon>
        <taxon>Pseudomonadota</taxon>
        <taxon>Gammaproteobacteria</taxon>
        <taxon>Lysobacterales</taxon>
        <taxon>Lysobacteraceae</taxon>
        <taxon>Xanthomonas</taxon>
    </lineage>
</organism>
<feature type="chain" id="PRO_0000160872" description="L-threonine 3-dehydrogenase">
    <location>
        <begin position="1"/>
        <end position="340"/>
    </location>
</feature>
<feature type="active site" description="Charge relay system" evidence="1">
    <location>
        <position position="40"/>
    </location>
</feature>
<feature type="active site" description="Charge relay system" evidence="1">
    <location>
        <position position="43"/>
    </location>
</feature>
<feature type="binding site" evidence="1">
    <location>
        <position position="38"/>
    </location>
    <ligand>
        <name>Zn(2+)</name>
        <dbReference type="ChEBI" id="CHEBI:29105"/>
        <label>1</label>
        <note>catalytic</note>
    </ligand>
</feature>
<feature type="binding site" evidence="1">
    <location>
        <position position="63"/>
    </location>
    <ligand>
        <name>Zn(2+)</name>
        <dbReference type="ChEBI" id="CHEBI:29105"/>
        <label>1</label>
        <note>catalytic</note>
    </ligand>
</feature>
<feature type="binding site" evidence="1">
    <location>
        <position position="64"/>
    </location>
    <ligand>
        <name>Zn(2+)</name>
        <dbReference type="ChEBI" id="CHEBI:29105"/>
        <label>1</label>
        <note>catalytic</note>
    </ligand>
</feature>
<feature type="binding site" evidence="1">
    <location>
        <position position="93"/>
    </location>
    <ligand>
        <name>Zn(2+)</name>
        <dbReference type="ChEBI" id="CHEBI:29105"/>
        <label>2</label>
    </ligand>
</feature>
<feature type="binding site" evidence="1">
    <location>
        <position position="96"/>
    </location>
    <ligand>
        <name>Zn(2+)</name>
        <dbReference type="ChEBI" id="CHEBI:29105"/>
        <label>2</label>
    </ligand>
</feature>
<feature type="binding site" evidence="1">
    <location>
        <position position="99"/>
    </location>
    <ligand>
        <name>Zn(2+)</name>
        <dbReference type="ChEBI" id="CHEBI:29105"/>
        <label>2</label>
    </ligand>
</feature>
<feature type="binding site" evidence="1">
    <location>
        <position position="107"/>
    </location>
    <ligand>
        <name>Zn(2+)</name>
        <dbReference type="ChEBI" id="CHEBI:29105"/>
        <label>2</label>
    </ligand>
</feature>
<feature type="binding site" evidence="1">
    <location>
        <position position="175"/>
    </location>
    <ligand>
        <name>NAD(+)</name>
        <dbReference type="ChEBI" id="CHEBI:57540"/>
    </ligand>
</feature>
<feature type="binding site" evidence="1">
    <location>
        <position position="195"/>
    </location>
    <ligand>
        <name>NAD(+)</name>
        <dbReference type="ChEBI" id="CHEBI:57540"/>
    </ligand>
</feature>
<feature type="binding site" evidence="1">
    <location>
        <position position="200"/>
    </location>
    <ligand>
        <name>NAD(+)</name>
        <dbReference type="ChEBI" id="CHEBI:57540"/>
    </ligand>
</feature>
<feature type="binding site" evidence="1">
    <location>
        <begin position="261"/>
        <end position="263"/>
    </location>
    <ligand>
        <name>NAD(+)</name>
        <dbReference type="ChEBI" id="CHEBI:57540"/>
    </ligand>
</feature>
<feature type="binding site" evidence="1">
    <location>
        <begin position="285"/>
        <end position="286"/>
    </location>
    <ligand>
        <name>NAD(+)</name>
        <dbReference type="ChEBI" id="CHEBI:57540"/>
    </ligand>
</feature>
<feature type="site" description="Important for catalytic activity for the proton relay mechanism but does not participate directly in the coordination of zinc atom" evidence="1">
    <location>
        <position position="148"/>
    </location>
</feature>
<reference key="1">
    <citation type="journal article" date="2005" name="Nucleic Acids Res.">
        <title>The genome sequence of Xanthomonas oryzae pathovar oryzae KACC10331, the bacterial blight pathogen of rice.</title>
        <authorList>
            <person name="Lee B.-M."/>
            <person name="Park Y.-J."/>
            <person name="Park D.-S."/>
            <person name="Kang H.-W."/>
            <person name="Kim J.-G."/>
            <person name="Song E.-S."/>
            <person name="Park I.-C."/>
            <person name="Yoon U.-H."/>
            <person name="Hahn J.-H."/>
            <person name="Koo B.-S."/>
            <person name="Lee G.-B."/>
            <person name="Kim H."/>
            <person name="Park H.-S."/>
            <person name="Yoon K.-O."/>
            <person name="Kim J.-H."/>
            <person name="Jung C.-H."/>
            <person name="Koh N.-H."/>
            <person name="Seo J.-S."/>
            <person name="Go S.-J."/>
        </authorList>
    </citation>
    <scope>NUCLEOTIDE SEQUENCE [LARGE SCALE GENOMIC DNA]</scope>
    <source>
        <strain>KACC10331 / KXO85</strain>
    </source>
</reference>
<accession>Q5GWI3</accession>
<name>TDH_XANOR</name>
<sequence length="340" mass="37125">MKALVKRETNKGIWLEQVPVPTPGPNEVLIKLEKTAICGTDLHIYLWDEWSQRTIKPGLTIGHEFVGRVAELGSAVTGYQVGQRVSAEGHIVCGHCRNCRGGRPHLCPNTMGIGVNVNGAFAEYMVMPASNLWPIPDQIPSELAAFFDPYGNAAHCALEFDVIGEDVLITGAGPIGIIAAGICKHIGARNVVVTDVNDFRLKLAADMGATRVVNVSKTSLKDVMADLHMEGFDVGLEMSGNPRAFNDMLDCMYHGGKIAMLGIMPRGAGCDWDKIIFKGLTVQGIYGRKMYETWYKMTQLVLSGFPLHKVLTHQLPIDDFQKGFDLMEAGKAGKVVLSWN</sequence>
<proteinExistence type="inferred from homology"/>
<keyword id="KW-0963">Cytoplasm</keyword>
<keyword id="KW-0479">Metal-binding</keyword>
<keyword id="KW-0520">NAD</keyword>
<keyword id="KW-0560">Oxidoreductase</keyword>
<keyword id="KW-1185">Reference proteome</keyword>
<keyword id="KW-0862">Zinc</keyword>
<comment type="function">
    <text evidence="1">Catalyzes the NAD(+)-dependent oxidation of L-threonine to 2-amino-3-ketobutyrate.</text>
</comment>
<comment type="catalytic activity">
    <reaction evidence="1">
        <text>L-threonine + NAD(+) = (2S)-2-amino-3-oxobutanoate + NADH + H(+)</text>
        <dbReference type="Rhea" id="RHEA:13161"/>
        <dbReference type="ChEBI" id="CHEBI:15378"/>
        <dbReference type="ChEBI" id="CHEBI:57540"/>
        <dbReference type="ChEBI" id="CHEBI:57926"/>
        <dbReference type="ChEBI" id="CHEBI:57945"/>
        <dbReference type="ChEBI" id="CHEBI:78948"/>
        <dbReference type="EC" id="1.1.1.103"/>
    </reaction>
</comment>
<comment type="cofactor">
    <cofactor evidence="1">
        <name>Zn(2+)</name>
        <dbReference type="ChEBI" id="CHEBI:29105"/>
    </cofactor>
    <text evidence="1">Binds 2 Zn(2+) ions per subunit.</text>
</comment>
<comment type="pathway">
    <text evidence="1">Amino-acid degradation; L-threonine degradation via oxydo-reductase pathway; glycine from L-threonine: step 1/2.</text>
</comment>
<comment type="subunit">
    <text evidence="1">Homotetramer.</text>
</comment>
<comment type="subcellular location">
    <subcellularLocation>
        <location evidence="1">Cytoplasm</location>
    </subcellularLocation>
</comment>
<comment type="similarity">
    <text evidence="1">Belongs to the zinc-containing alcohol dehydrogenase family.</text>
</comment>
<comment type="sequence caution" evidence="2">
    <conflict type="erroneous initiation">
        <sequence resource="EMBL-CDS" id="AAW76938"/>
    </conflict>
</comment>
<protein>
    <recommendedName>
        <fullName evidence="1">L-threonine 3-dehydrogenase</fullName>
        <shortName evidence="1">TDH</shortName>
        <ecNumber evidence="1">1.1.1.103</ecNumber>
    </recommendedName>
</protein>